<reference key="1">
    <citation type="journal article" date="2004" name="Proc. Natl. Acad. Sci. U.S.A.">
        <title>Complete genomes of two clinical Staphylococcus aureus strains: evidence for the rapid evolution of virulence and drug resistance.</title>
        <authorList>
            <person name="Holden M.T.G."/>
            <person name="Feil E.J."/>
            <person name="Lindsay J.A."/>
            <person name="Peacock S.J."/>
            <person name="Day N.P.J."/>
            <person name="Enright M.C."/>
            <person name="Foster T.J."/>
            <person name="Moore C.E."/>
            <person name="Hurst L."/>
            <person name="Atkin R."/>
            <person name="Barron A."/>
            <person name="Bason N."/>
            <person name="Bentley S.D."/>
            <person name="Chillingworth C."/>
            <person name="Chillingworth T."/>
            <person name="Churcher C."/>
            <person name="Clark L."/>
            <person name="Corton C."/>
            <person name="Cronin A."/>
            <person name="Doggett J."/>
            <person name="Dowd L."/>
            <person name="Feltwell T."/>
            <person name="Hance Z."/>
            <person name="Harris B."/>
            <person name="Hauser H."/>
            <person name="Holroyd S."/>
            <person name="Jagels K."/>
            <person name="James K.D."/>
            <person name="Lennard N."/>
            <person name="Line A."/>
            <person name="Mayes R."/>
            <person name="Moule S."/>
            <person name="Mungall K."/>
            <person name="Ormond D."/>
            <person name="Quail M.A."/>
            <person name="Rabbinowitsch E."/>
            <person name="Rutherford K.M."/>
            <person name="Sanders M."/>
            <person name="Sharp S."/>
            <person name="Simmonds M."/>
            <person name="Stevens K."/>
            <person name="Whitehead S."/>
            <person name="Barrell B.G."/>
            <person name="Spratt B.G."/>
            <person name="Parkhill J."/>
        </authorList>
    </citation>
    <scope>NUCLEOTIDE SEQUENCE [LARGE SCALE GENOMIC DNA]</scope>
    <source>
        <strain>MRSA252</strain>
    </source>
</reference>
<sequence length="137" mass="15287">MPTINQLVRKPRQSKIKKSDSPALNKGFNSKKKKFTDLNSPQKRGVCTRVGTMTPKKPNSALRKYARVRLSNNIEINAYIPGIGHNLQEHSVVLVRGGRVKDLPGVRYHIVRGALDTSGVDGRRQGRSLYGTKKPKN</sequence>
<protein>
    <recommendedName>
        <fullName evidence="2">Small ribosomal subunit protein uS12</fullName>
    </recommendedName>
    <alternativeName>
        <fullName evidence="4">30S ribosomal protein S12</fullName>
    </alternativeName>
</protein>
<feature type="chain" id="PRO_0000146313" description="Small ribosomal subunit protein uS12">
    <location>
        <begin position="1"/>
        <end position="137"/>
    </location>
</feature>
<feature type="region of interest" description="Disordered" evidence="3">
    <location>
        <begin position="1"/>
        <end position="55"/>
    </location>
</feature>
<feature type="region of interest" description="Disordered" evidence="3">
    <location>
        <begin position="118"/>
        <end position="137"/>
    </location>
</feature>
<feature type="modified residue" description="3-methylthioaspartic acid" evidence="1">
    <location>
        <position position="102"/>
    </location>
</feature>
<gene>
    <name evidence="2" type="primary">rpsL</name>
    <name type="ordered locus">SAR0550</name>
</gene>
<proteinExistence type="inferred from homology"/>
<evidence type="ECO:0000250" key="1"/>
<evidence type="ECO:0000255" key="2">
    <source>
        <dbReference type="HAMAP-Rule" id="MF_00403"/>
    </source>
</evidence>
<evidence type="ECO:0000256" key="3">
    <source>
        <dbReference type="SAM" id="MobiDB-lite"/>
    </source>
</evidence>
<evidence type="ECO:0000305" key="4"/>
<accession>Q6GJC3</accession>
<keyword id="KW-0488">Methylation</keyword>
<keyword id="KW-0687">Ribonucleoprotein</keyword>
<keyword id="KW-0689">Ribosomal protein</keyword>
<keyword id="KW-0694">RNA-binding</keyword>
<keyword id="KW-0699">rRNA-binding</keyword>
<keyword id="KW-0820">tRNA-binding</keyword>
<organism>
    <name type="scientific">Staphylococcus aureus (strain MRSA252)</name>
    <dbReference type="NCBI Taxonomy" id="282458"/>
    <lineage>
        <taxon>Bacteria</taxon>
        <taxon>Bacillati</taxon>
        <taxon>Bacillota</taxon>
        <taxon>Bacilli</taxon>
        <taxon>Bacillales</taxon>
        <taxon>Staphylococcaceae</taxon>
        <taxon>Staphylococcus</taxon>
    </lineage>
</organism>
<dbReference type="EMBL" id="BX571856">
    <property type="protein sequence ID" value="CAG39571.1"/>
    <property type="molecule type" value="Genomic_DNA"/>
</dbReference>
<dbReference type="RefSeq" id="WP_001142337.1">
    <property type="nucleotide sequence ID" value="NC_002952.2"/>
</dbReference>
<dbReference type="SMR" id="Q6GJC3"/>
<dbReference type="GeneID" id="98344879"/>
<dbReference type="KEGG" id="sar:SAR0550"/>
<dbReference type="HOGENOM" id="CLU_104295_1_2_9"/>
<dbReference type="Proteomes" id="UP000000596">
    <property type="component" value="Chromosome"/>
</dbReference>
<dbReference type="GO" id="GO:0015935">
    <property type="term" value="C:small ribosomal subunit"/>
    <property type="evidence" value="ECO:0007669"/>
    <property type="project" value="InterPro"/>
</dbReference>
<dbReference type="GO" id="GO:0019843">
    <property type="term" value="F:rRNA binding"/>
    <property type="evidence" value="ECO:0007669"/>
    <property type="project" value="UniProtKB-UniRule"/>
</dbReference>
<dbReference type="GO" id="GO:0003735">
    <property type="term" value="F:structural constituent of ribosome"/>
    <property type="evidence" value="ECO:0007669"/>
    <property type="project" value="InterPro"/>
</dbReference>
<dbReference type="GO" id="GO:0000049">
    <property type="term" value="F:tRNA binding"/>
    <property type="evidence" value="ECO:0007669"/>
    <property type="project" value="UniProtKB-UniRule"/>
</dbReference>
<dbReference type="GO" id="GO:0006412">
    <property type="term" value="P:translation"/>
    <property type="evidence" value="ECO:0007669"/>
    <property type="project" value="UniProtKB-UniRule"/>
</dbReference>
<dbReference type="CDD" id="cd03368">
    <property type="entry name" value="Ribosomal_S12"/>
    <property type="match status" value="1"/>
</dbReference>
<dbReference type="FunFam" id="2.40.50.140:FF:000001">
    <property type="entry name" value="30S ribosomal protein S12"/>
    <property type="match status" value="1"/>
</dbReference>
<dbReference type="Gene3D" id="2.40.50.140">
    <property type="entry name" value="Nucleic acid-binding proteins"/>
    <property type="match status" value="1"/>
</dbReference>
<dbReference type="HAMAP" id="MF_00403_B">
    <property type="entry name" value="Ribosomal_uS12_B"/>
    <property type="match status" value="1"/>
</dbReference>
<dbReference type="InterPro" id="IPR012340">
    <property type="entry name" value="NA-bd_OB-fold"/>
</dbReference>
<dbReference type="InterPro" id="IPR006032">
    <property type="entry name" value="Ribosomal_uS12"/>
</dbReference>
<dbReference type="InterPro" id="IPR005679">
    <property type="entry name" value="Ribosomal_uS12_bac"/>
</dbReference>
<dbReference type="NCBIfam" id="TIGR00981">
    <property type="entry name" value="rpsL_bact"/>
    <property type="match status" value="1"/>
</dbReference>
<dbReference type="PANTHER" id="PTHR11652">
    <property type="entry name" value="30S RIBOSOMAL PROTEIN S12 FAMILY MEMBER"/>
    <property type="match status" value="1"/>
</dbReference>
<dbReference type="Pfam" id="PF00164">
    <property type="entry name" value="Ribosom_S12_S23"/>
    <property type="match status" value="1"/>
</dbReference>
<dbReference type="PIRSF" id="PIRSF002133">
    <property type="entry name" value="Ribosomal_S12/S23"/>
    <property type="match status" value="1"/>
</dbReference>
<dbReference type="PRINTS" id="PR01034">
    <property type="entry name" value="RIBOSOMALS12"/>
</dbReference>
<dbReference type="SUPFAM" id="SSF50249">
    <property type="entry name" value="Nucleic acid-binding proteins"/>
    <property type="match status" value="1"/>
</dbReference>
<dbReference type="PROSITE" id="PS00055">
    <property type="entry name" value="RIBOSOMAL_S12"/>
    <property type="match status" value="1"/>
</dbReference>
<name>RS12_STAAR</name>
<comment type="function">
    <text evidence="2">With S4 and S5 plays an important role in translational accuracy.</text>
</comment>
<comment type="function">
    <text evidence="2">Interacts with and stabilizes bases of the 16S rRNA that are involved in tRNA selection in the A site and with the mRNA backbone. Located at the interface of the 30S and 50S subunits, it traverses the body of the 30S subunit contacting proteins on the other side and probably holding the rRNA structure together. The combined cluster of proteins S8, S12 and S17 appears to hold together the shoulder and platform of the 30S subunit.</text>
</comment>
<comment type="subunit">
    <text evidence="2">Part of the 30S ribosomal subunit. Contacts proteins S8 and S17. May interact with IF1 in the 30S initiation complex.</text>
</comment>
<comment type="similarity">
    <text evidence="2">Belongs to the universal ribosomal protein uS12 family.</text>
</comment>